<proteinExistence type="evidence at protein level"/>
<evidence type="ECO:0000250" key="1">
    <source>
        <dbReference type="UniProtKB" id="P42778"/>
    </source>
</evidence>
<evidence type="ECO:0000269" key="2">
    <source>
    </source>
</evidence>
<evidence type="ECO:0000305" key="3"/>
<organism>
    <name type="scientific">Thermus aquaticus</name>
    <dbReference type="NCBI Taxonomy" id="271"/>
    <lineage>
        <taxon>Bacteria</taxon>
        <taxon>Thermotogati</taxon>
        <taxon>Deinococcota</taxon>
        <taxon>Deinococci</taxon>
        <taxon>Thermales</taxon>
        <taxon>Thermaceae</taxon>
        <taxon>Thermus</taxon>
    </lineage>
</organism>
<protein>
    <recommendedName>
        <fullName>Aminopeptidase T</fullName>
        <shortName>AP-T</shortName>
        <ecNumber>3.4.11.-</ecNumber>
    </recommendedName>
    <alternativeName>
        <fullName>Heat-stable aminopeptidase</fullName>
    </alternativeName>
</protein>
<comment type="function">
    <text evidence="2">Metal-dependent exopeptidase.</text>
</comment>
<comment type="cofactor">
    <cofactor evidence="2">
        <name>Co(2+)</name>
        <dbReference type="ChEBI" id="CHEBI:48828"/>
    </cofactor>
    <cofactor evidence="1">
        <name>Zn(2+)</name>
        <dbReference type="ChEBI" id="CHEBI:29105"/>
    </cofactor>
    <cofactor evidence="1">
        <name>Mg(2+)</name>
        <dbReference type="ChEBI" id="CHEBI:18420"/>
    </cofactor>
    <text evidence="1">Binds 2 divalent metal cations per subunit. Can use cobalt, zinc, and possibly also magnesium ions.</text>
</comment>
<comment type="subunit">
    <text evidence="2">Homodimer.</text>
</comment>
<comment type="similarity">
    <text evidence="3">Belongs to the peptidase M29 family.</text>
</comment>
<sequence>MDAFTENLNKLAELAIRVGLNLEEGQEIVATAPIEAVDFVRLLAEKAYENGASLFTVLYGDNLIARKRLALVPEAHLDRAPAWLYEGMAKAFHEGAARLAVSGNDPKALEGLPPERVGRAQQAQSRAYRPTLSAITEFVTNWTIVPFAHPGWAKAVFPGLPEEEAVQRLWQAIFQATRVDQEDPVAAWEAHNRVLHAKVAFLNEKRFHALHFQGPGTDLTVGLAEGHLWQGGATPTKKGRLCNPNLPTEEVFTAPHRERVEGVVRASRPLALSGQLVEGLWARFEGGVAVEVGAEKGEEVLKKLLDTDEGARRLGEVALVPADNPIAKTGLVFFDTLFDENAASHIAFGQAYAENLEGRPSGEEFRRRGGNESMVHVDWMIGSEEVDVDGLLEDGTRVPLMRRGRWVI</sequence>
<accession>P23341</accession>
<name>AMPT_THEAQ</name>
<reference key="1">
    <citation type="journal article" date="1990" name="Agric. Biol. Chem.">
        <title>Molecular cloning and nucleotide sequence of the aminopeptidase T gene of Thermus aquaticus YT-1 and its high-level expression in Escherichia coli.</title>
        <authorList>
            <person name="Motoshima H."/>
            <person name="Azuma N."/>
            <person name="Kaminogawa S."/>
            <person name="Ono M."/>
            <person name="Minagawa E."/>
            <person name="Matsuzawa H."/>
            <person name="Ohta T."/>
            <person name="Yamauchi K."/>
        </authorList>
    </citation>
    <scope>NUCLEOTIDE SEQUENCE [GENOMIC DNA]</scope>
    <scope>PARTIAL PROTEIN SEQUENCE</scope>
    <scope>FUNCTION</scope>
    <scope>CATALYTIC ACTIVITY</scope>
    <scope>COFACTOR</scope>
    <scope>SUBUNIT</scope>
    <source>
        <strain>ATCC 25104 / DSM 625 / JCM 10724 / NBRC 103206 / NCIMB 11243 / YT-1</strain>
    </source>
</reference>
<reference key="2">
    <citation type="journal article" date="1997" name="Biosci. Biotechnol. Biochem.">
        <title>Cloning of genes of the aminopeptidase T family from Thermus thermophilus HB8 and Bacillus stearothermophilus NCIB8924: apparent similarity to the leucyl aminopeptidase family.</title>
        <authorList>
            <person name="Motoshima H."/>
            <person name="Minagawa E."/>
            <person name="Tsukasaki F."/>
            <person name="Kaminogawa S."/>
        </authorList>
    </citation>
    <scope>NUCLEOTIDE SEQUENCE [GENOMIC DNA]</scope>
    <source>
        <strain>ATCC 25104 / DSM 625 / JCM 10724 / NBRC 103206 / NCIMB 11243 / YT-1</strain>
    </source>
</reference>
<reference key="3">
    <citation type="journal article" date="1988" name="Agric. Biol. Chem.">
        <title>Isolation and characterization of a thermostable aminopeptidase (aminopeptidase T) from Thermus aquaticus YT-1, an extremely thermophilic bacterium.</title>
        <authorList>
            <person name="Minagawa E."/>
            <person name="Kaminogawa S."/>
            <person name="Matsuzawa H."/>
            <person name="Ohta T."/>
            <person name="Yamauchi K."/>
        </authorList>
    </citation>
    <scope>PROTEIN SEQUENCE OF 1-34</scope>
    <source>
        <strain>ATCC 25104 / DSM 625 / JCM 10724 / NBRC 103206 / NCIMB 11243 / YT-1</strain>
    </source>
</reference>
<feature type="chain" id="PRO_0000079175" description="Aminopeptidase T">
    <location>
        <begin position="1"/>
        <end position="408"/>
    </location>
</feature>
<feature type="binding site" evidence="1">
    <location>
        <position position="250"/>
    </location>
    <ligand>
        <name>a divalent metal cation</name>
        <dbReference type="ChEBI" id="CHEBI:60240"/>
        <label>1</label>
    </ligand>
</feature>
<feature type="binding site" evidence="1">
    <location>
        <position position="316"/>
    </location>
    <ligand>
        <name>a divalent metal cation</name>
        <dbReference type="ChEBI" id="CHEBI:60240"/>
        <label>1</label>
    </ligand>
</feature>
<feature type="binding site" evidence="1">
    <location>
        <position position="316"/>
    </location>
    <ligand>
        <name>a divalent metal cation</name>
        <dbReference type="ChEBI" id="CHEBI:60240"/>
        <label>2</label>
    </ligand>
</feature>
<feature type="binding site" evidence="1">
    <location>
        <position position="340"/>
    </location>
    <ligand>
        <name>a divalent metal cation</name>
        <dbReference type="ChEBI" id="CHEBI:60240"/>
        <label>1</label>
    </ligand>
</feature>
<feature type="binding site" evidence="1">
    <location>
        <position position="340"/>
    </location>
    <ligand>
        <name>a divalent metal cation</name>
        <dbReference type="ChEBI" id="CHEBI:60240"/>
        <label>2</label>
    </ligand>
</feature>
<feature type="binding site" evidence="1">
    <location>
        <position position="345"/>
    </location>
    <ligand>
        <name>a divalent metal cation</name>
        <dbReference type="ChEBI" id="CHEBI:60240"/>
        <label>1</label>
    </ligand>
</feature>
<feature type="binding site" evidence="1">
    <location>
        <position position="376"/>
    </location>
    <ligand>
        <name>a divalent metal cation</name>
        <dbReference type="ChEBI" id="CHEBI:60240"/>
        <label>2</label>
    </ligand>
</feature>
<feature type="binding site" evidence="1">
    <location>
        <position position="378"/>
    </location>
    <ligand>
        <name>a divalent metal cation</name>
        <dbReference type="ChEBI" id="CHEBI:60240"/>
        <label>2</label>
    </ligand>
</feature>
<dbReference type="EC" id="3.4.11.-"/>
<dbReference type="EMBL" id="D00814">
    <property type="protein sequence ID" value="BAA00695.1"/>
    <property type="molecule type" value="Genomic_DNA"/>
</dbReference>
<dbReference type="EMBL" id="D87664">
    <property type="protein sequence ID" value="BAA13426.1"/>
    <property type="molecule type" value="Genomic_DNA"/>
</dbReference>
<dbReference type="PIR" id="JN0087">
    <property type="entry name" value="JN0087"/>
</dbReference>
<dbReference type="RefSeq" id="WP_053768123.1">
    <property type="nucleotide sequence ID" value="NZ_LHCI01000106.1"/>
</dbReference>
<dbReference type="SMR" id="P23341"/>
<dbReference type="MEROPS" id="M29.001"/>
<dbReference type="GO" id="GO:0004177">
    <property type="term" value="F:aminopeptidase activity"/>
    <property type="evidence" value="ECO:0007669"/>
    <property type="project" value="UniProtKB-KW"/>
</dbReference>
<dbReference type="GO" id="GO:0046872">
    <property type="term" value="F:metal ion binding"/>
    <property type="evidence" value="ECO:0007669"/>
    <property type="project" value="UniProtKB-KW"/>
</dbReference>
<dbReference type="GO" id="GO:0008237">
    <property type="term" value="F:metallopeptidase activity"/>
    <property type="evidence" value="ECO:0007669"/>
    <property type="project" value="UniProtKB-KW"/>
</dbReference>
<dbReference type="GO" id="GO:0006508">
    <property type="term" value="P:proteolysis"/>
    <property type="evidence" value="ECO:0007669"/>
    <property type="project" value="UniProtKB-KW"/>
</dbReference>
<dbReference type="Gene3D" id="3.40.1830.10">
    <property type="entry name" value="Thermophilic metalloprotease (M29)"/>
    <property type="match status" value="1"/>
</dbReference>
<dbReference type="InterPro" id="IPR052170">
    <property type="entry name" value="M29_Exopeptidase"/>
</dbReference>
<dbReference type="InterPro" id="IPR035097">
    <property type="entry name" value="M29_N-terminal"/>
</dbReference>
<dbReference type="InterPro" id="IPR000787">
    <property type="entry name" value="Peptidase_M29"/>
</dbReference>
<dbReference type="PANTHER" id="PTHR34448">
    <property type="entry name" value="AMINOPEPTIDASE"/>
    <property type="match status" value="1"/>
</dbReference>
<dbReference type="PANTHER" id="PTHR34448:SF3">
    <property type="entry name" value="AMINOPEPTIDASE AMPS"/>
    <property type="match status" value="1"/>
</dbReference>
<dbReference type="Pfam" id="PF02073">
    <property type="entry name" value="Peptidase_M29"/>
    <property type="match status" value="1"/>
</dbReference>
<dbReference type="PRINTS" id="PR00919">
    <property type="entry name" value="THERMOPTASE"/>
</dbReference>
<dbReference type="SUPFAM" id="SSF144052">
    <property type="entry name" value="Thermophilic metalloprotease-like"/>
    <property type="match status" value="1"/>
</dbReference>
<keyword id="KW-0031">Aminopeptidase</keyword>
<keyword id="KW-0170">Cobalt</keyword>
<keyword id="KW-0903">Direct protein sequencing</keyword>
<keyword id="KW-0378">Hydrolase</keyword>
<keyword id="KW-0479">Metal-binding</keyword>
<keyword id="KW-0482">Metalloprotease</keyword>
<keyword id="KW-0645">Protease</keyword>
<keyword id="KW-0862">Zinc</keyword>